<evidence type="ECO:0000255" key="1">
    <source>
        <dbReference type="HAMAP-Rule" id="MF_00105"/>
    </source>
</evidence>
<protein>
    <recommendedName>
        <fullName evidence="1">Transcription elongation factor GreA</fullName>
    </recommendedName>
    <alternativeName>
        <fullName evidence="1">Transcript cleavage factor GreA</fullName>
    </alternativeName>
</protein>
<dbReference type="EMBL" id="AE005672">
    <property type="protein sequence ID" value="AAK75607.1"/>
    <property type="molecule type" value="Genomic_DNA"/>
</dbReference>
<dbReference type="PIR" id="F95176">
    <property type="entry name" value="F95176"/>
</dbReference>
<dbReference type="RefSeq" id="WP_000818763.1">
    <property type="nucleotide sequence ID" value="NC_003028.3"/>
</dbReference>
<dbReference type="SMR" id="Q97PT2"/>
<dbReference type="PaxDb" id="170187-SP_1517"/>
<dbReference type="EnsemblBacteria" id="AAK75607">
    <property type="protein sequence ID" value="AAK75607"/>
    <property type="gene ID" value="SP_1517"/>
</dbReference>
<dbReference type="KEGG" id="spn:SP_1517"/>
<dbReference type="eggNOG" id="COG0782">
    <property type="taxonomic scope" value="Bacteria"/>
</dbReference>
<dbReference type="PhylomeDB" id="Q97PT2"/>
<dbReference type="BioCyc" id="SPNE170187:G1FZB-1535-MONOMER"/>
<dbReference type="Proteomes" id="UP000000585">
    <property type="component" value="Chromosome"/>
</dbReference>
<dbReference type="GO" id="GO:0003677">
    <property type="term" value="F:DNA binding"/>
    <property type="evidence" value="ECO:0007669"/>
    <property type="project" value="UniProtKB-UniRule"/>
</dbReference>
<dbReference type="GO" id="GO:0070063">
    <property type="term" value="F:RNA polymerase binding"/>
    <property type="evidence" value="ECO:0007669"/>
    <property type="project" value="InterPro"/>
</dbReference>
<dbReference type="GO" id="GO:0006354">
    <property type="term" value="P:DNA-templated transcription elongation"/>
    <property type="evidence" value="ECO:0007669"/>
    <property type="project" value="TreeGrafter"/>
</dbReference>
<dbReference type="GO" id="GO:0032784">
    <property type="term" value="P:regulation of DNA-templated transcription elongation"/>
    <property type="evidence" value="ECO:0007669"/>
    <property type="project" value="UniProtKB-UniRule"/>
</dbReference>
<dbReference type="FunFam" id="1.10.287.180:FF:000001">
    <property type="entry name" value="Transcription elongation factor GreA"/>
    <property type="match status" value="1"/>
</dbReference>
<dbReference type="FunFam" id="3.10.50.30:FF:000001">
    <property type="entry name" value="Transcription elongation factor GreA"/>
    <property type="match status" value="1"/>
</dbReference>
<dbReference type="Gene3D" id="3.10.50.30">
    <property type="entry name" value="Transcription elongation factor, GreA/GreB, C-terminal domain"/>
    <property type="match status" value="1"/>
</dbReference>
<dbReference type="Gene3D" id="1.10.287.180">
    <property type="entry name" value="Transcription elongation factor, GreA/GreB, N-terminal domain"/>
    <property type="match status" value="1"/>
</dbReference>
<dbReference type="HAMAP" id="MF_00105">
    <property type="entry name" value="GreA_GreB"/>
    <property type="match status" value="1"/>
</dbReference>
<dbReference type="InterPro" id="IPR036953">
    <property type="entry name" value="GreA/GreB_C_sf"/>
</dbReference>
<dbReference type="InterPro" id="IPR018151">
    <property type="entry name" value="TF_GreA/GreB_CS"/>
</dbReference>
<dbReference type="InterPro" id="IPR006359">
    <property type="entry name" value="Tscrpt_elong_fac_GreA"/>
</dbReference>
<dbReference type="InterPro" id="IPR028624">
    <property type="entry name" value="Tscrpt_elong_fac_GreA/B"/>
</dbReference>
<dbReference type="InterPro" id="IPR001437">
    <property type="entry name" value="Tscrpt_elong_fac_GreA/B_C"/>
</dbReference>
<dbReference type="InterPro" id="IPR023459">
    <property type="entry name" value="Tscrpt_elong_fac_GreA/B_fam"/>
</dbReference>
<dbReference type="InterPro" id="IPR022691">
    <property type="entry name" value="Tscrpt_elong_fac_GreA/B_N"/>
</dbReference>
<dbReference type="InterPro" id="IPR036805">
    <property type="entry name" value="Tscrpt_elong_fac_GreA/B_N_sf"/>
</dbReference>
<dbReference type="NCBIfam" id="TIGR01462">
    <property type="entry name" value="greA"/>
    <property type="match status" value="1"/>
</dbReference>
<dbReference type="NCBIfam" id="NF001260">
    <property type="entry name" value="PRK00226.1-1"/>
    <property type="match status" value="1"/>
</dbReference>
<dbReference type="NCBIfam" id="NF001263">
    <property type="entry name" value="PRK00226.1-4"/>
    <property type="match status" value="1"/>
</dbReference>
<dbReference type="PANTHER" id="PTHR30437">
    <property type="entry name" value="TRANSCRIPTION ELONGATION FACTOR GREA"/>
    <property type="match status" value="1"/>
</dbReference>
<dbReference type="PANTHER" id="PTHR30437:SF4">
    <property type="entry name" value="TRANSCRIPTION ELONGATION FACTOR GREA"/>
    <property type="match status" value="1"/>
</dbReference>
<dbReference type="Pfam" id="PF01272">
    <property type="entry name" value="GreA_GreB"/>
    <property type="match status" value="1"/>
</dbReference>
<dbReference type="Pfam" id="PF03449">
    <property type="entry name" value="GreA_GreB_N"/>
    <property type="match status" value="1"/>
</dbReference>
<dbReference type="PIRSF" id="PIRSF006092">
    <property type="entry name" value="GreA_GreB"/>
    <property type="match status" value="1"/>
</dbReference>
<dbReference type="SUPFAM" id="SSF54534">
    <property type="entry name" value="FKBP-like"/>
    <property type="match status" value="1"/>
</dbReference>
<dbReference type="SUPFAM" id="SSF46557">
    <property type="entry name" value="GreA transcript cleavage protein, N-terminal domain"/>
    <property type="match status" value="1"/>
</dbReference>
<dbReference type="PROSITE" id="PS00829">
    <property type="entry name" value="GREAB_1"/>
    <property type="match status" value="1"/>
</dbReference>
<dbReference type="PROSITE" id="PS00830">
    <property type="entry name" value="GREAB_2"/>
    <property type="match status" value="1"/>
</dbReference>
<organism>
    <name type="scientific">Streptococcus pneumoniae serotype 4 (strain ATCC BAA-334 / TIGR4)</name>
    <dbReference type="NCBI Taxonomy" id="170187"/>
    <lineage>
        <taxon>Bacteria</taxon>
        <taxon>Bacillati</taxon>
        <taxon>Bacillota</taxon>
        <taxon>Bacilli</taxon>
        <taxon>Lactobacillales</taxon>
        <taxon>Streptococcaceae</taxon>
        <taxon>Streptococcus</taxon>
    </lineage>
</organism>
<sequence>MAEKTYPMTLEEKEKLEKELEELKLVRRPEVVERIKIARSYGDLSENSEYEAAKDEQAFVEGQISSLETKIRYAEIVNSDAVAQDEVAIGKTVTIQEIGEDEEEVYIIVGSAGADAFVGKVSNESPIGQALIGKKTGDTATIETPVGSYDVKILKVEKTA</sequence>
<accession>Q97PT2</accession>
<name>GREA_STRPN</name>
<proteinExistence type="inferred from homology"/>
<keyword id="KW-0175">Coiled coil</keyword>
<keyword id="KW-0238">DNA-binding</keyword>
<keyword id="KW-1185">Reference proteome</keyword>
<keyword id="KW-0804">Transcription</keyword>
<keyword id="KW-0805">Transcription regulation</keyword>
<feature type="chain" id="PRO_0000176979" description="Transcription elongation factor GreA">
    <location>
        <begin position="1"/>
        <end position="160"/>
    </location>
</feature>
<feature type="coiled-coil region" evidence="1">
    <location>
        <begin position="1"/>
        <end position="72"/>
    </location>
</feature>
<gene>
    <name evidence="1" type="primary">greA</name>
    <name type="ordered locus">SP_1517</name>
</gene>
<comment type="function">
    <text evidence="1">Necessary for efficient RNA polymerase transcription elongation past template-encoded arresting sites. The arresting sites in DNA have the property of trapping a certain fraction of elongating RNA polymerases that pass through, resulting in locked ternary complexes. Cleavage of the nascent transcript by cleavage factors such as GreA or GreB allows the resumption of elongation from the new 3'terminus. GreA releases sequences of 2 to 3 nucleotides.</text>
</comment>
<comment type="similarity">
    <text evidence="1">Belongs to the GreA/GreB family.</text>
</comment>
<reference key="1">
    <citation type="journal article" date="2001" name="Science">
        <title>Complete genome sequence of a virulent isolate of Streptococcus pneumoniae.</title>
        <authorList>
            <person name="Tettelin H."/>
            <person name="Nelson K.E."/>
            <person name="Paulsen I.T."/>
            <person name="Eisen J.A."/>
            <person name="Read T.D."/>
            <person name="Peterson S.N."/>
            <person name="Heidelberg J.F."/>
            <person name="DeBoy R.T."/>
            <person name="Haft D.H."/>
            <person name="Dodson R.J."/>
            <person name="Durkin A.S."/>
            <person name="Gwinn M.L."/>
            <person name="Kolonay J.F."/>
            <person name="Nelson W.C."/>
            <person name="Peterson J.D."/>
            <person name="Umayam L.A."/>
            <person name="White O."/>
            <person name="Salzberg S.L."/>
            <person name="Lewis M.R."/>
            <person name="Radune D."/>
            <person name="Holtzapple E.K."/>
            <person name="Khouri H.M."/>
            <person name="Wolf A.M."/>
            <person name="Utterback T.R."/>
            <person name="Hansen C.L."/>
            <person name="McDonald L.A."/>
            <person name="Feldblyum T.V."/>
            <person name="Angiuoli S.V."/>
            <person name="Dickinson T."/>
            <person name="Hickey E.K."/>
            <person name="Holt I.E."/>
            <person name="Loftus B.J."/>
            <person name="Yang F."/>
            <person name="Smith H.O."/>
            <person name="Venter J.C."/>
            <person name="Dougherty B.A."/>
            <person name="Morrison D.A."/>
            <person name="Hollingshead S.K."/>
            <person name="Fraser C.M."/>
        </authorList>
    </citation>
    <scope>NUCLEOTIDE SEQUENCE [LARGE SCALE GENOMIC DNA]</scope>
    <source>
        <strain>ATCC BAA-334 / TIGR4</strain>
    </source>
</reference>